<name>DAPB_PELPB</name>
<organism>
    <name type="scientific">Pelodictyon phaeoclathratiforme (strain DSM 5477 / BU-1)</name>
    <dbReference type="NCBI Taxonomy" id="324925"/>
    <lineage>
        <taxon>Bacteria</taxon>
        <taxon>Pseudomonadati</taxon>
        <taxon>Chlorobiota</taxon>
        <taxon>Chlorobiia</taxon>
        <taxon>Chlorobiales</taxon>
        <taxon>Chlorobiaceae</taxon>
        <taxon>Chlorobium/Pelodictyon group</taxon>
        <taxon>Pelodictyon</taxon>
    </lineage>
</organism>
<dbReference type="EC" id="1.17.1.8" evidence="1"/>
<dbReference type="EMBL" id="CP001110">
    <property type="protein sequence ID" value="ACF44625.1"/>
    <property type="molecule type" value="Genomic_DNA"/>
</dbReference>
<dbReference type="RefSeq" id="WP_012509099.1">
    <property type="nucleotide sequence ID" value="NC_011060.1"/>
</dbReference>
<dbReference type="SMR" id="B4SEU9"/>
<dbReference type="STRING" id="324925.Ppha_2437"/>
<dbReference type="KEGG" id="pph:Ppha_2437"/>
<dbReference type="eggNOG" id="COG0289">
    <property type="taxonomic scope" value="Bacteria"/>
</dbReference>
<dbReference type="HOGENOM" id="CLU_047479_1_0_10"/>
<dbReference type="OrthoDB" id="9790352at2"/>
<dbReference type="UniPathway" id="UPA00034">
    <property type="reaction ID" value="UER00018"/>
</dbReference>
<dbReference type="Proteomes" id="UP000002724">
    <property type="component" value="Chromosome"/>
</dbReference>
<dbReference type="GO" id="GO:0005829">
    <property type="term" value="C:cytosol"/>
    <property type="evidence" value="ECO:0007669"/>
    <property type="project" value="TreeGrafter"/>
</dbReference>
<dbReference type="GO" id="GO:0008839">
    <property type="term" value="F:4-hydroxy-tetrahydrodipicolinate reductase"/>
    <property type="evidence" value="ECO:0007669"/>
    <property type="project" value="UniProtKB-EC"/>
</dbReference>
<dbReference type="GO" id="GO:0051287">
    <property type="term" value="F:NAD binding"/>
    <property type="evidence" value="ECO:0007669"/>
    <property type="project" value="UniProtKB-UniRule"/>
</dbReference>
<dbReference type="GO" id="GO:0050661">
    <property type="term" value="F:NADP binding"/>
    <property type="evidence" value="ECO:0007669"/>
    <property type="project" value="UniProtKB-UniRule"/>
</dbReference>
<dbReference type="GO" id="GO:0016726">
    <property type="term" value="F:oxidoreductase activity, acting on CH or CH2 groups, NAD or NADP as acceptor"/>
    <property type="evidence" value="ECO:0007669"/>
    <property type="project" value="UniProtKB-UniRule"/>
</dbReference>
<dbReference type="GO" id="GO:0019877">
    <property type="term" value="P:diaminopimelate biosynthetic process"/>
    <property type="evidence" value="ECO:0007669"/>
    <property type="project" value="UniProtKB-UniRule"/>
</dbReference>
<dbReference type="GO" id="GO:0009089">
    <property type="term" value="P:lysine biosynthetic process via diaminopimelate"/>
    <property type="evidence" value="ECO:0007669"/>
    <property type="project" value="UniProtKB-UniRule"/>
</dbReference>
<dbReference type="Gene3D" id="3.30.360.10">
    <property type="entry name" value="Dihydrodipicolinate Reductase, domain 2"/>
    <property type="match status" value="1"/>
</dbReference>
<dbReference type="Gene3D" id="3.40.50.720">
    <property type="entry name" value="NAD(P)-binding Rossmann-like Domain"/>
    <property type="match status" value="1"/>
</dbReference>
<dbReference type="HAMAP" id="MF_00102">
    <property type="entry name" value="DapB"/>
    <property type="match status" value="1"/>
</dbReference>
<dbReference type="InterPro" id="IPR022663">
    <property type="entry name" value="DapB_C"/>
</dbReference>
<dbReference type="InterPro" id="IPR000846">
    <property type="entry name" value="DapB_N"/>
</dbReference>
<dbReference type="InterPro" id="IPR023940">
    <property type="entry name" value="DHDPR_bac"/>
</dbReference>
<dbReference type="InterPro" id="IPR036291">
    <property type="entry name" value="NAD(P)-bd_dom_sf"/>
</dbReference>
<dbReference type="NCBIfam" id="TIGR00036">
    <property type="entry name" value="dapB"/>
    <property type="match status" value="1"/>
</dbReference>
<dbReference type="PANTHER" id="PTHR20836:SF0">
    <property type="entry name" value="4-HYDROXY-TETRAHYDRODIPICOLINATE REDUCTASE 1, CHLOROPLASTIC-RELATED"/>
    <property type="match status" value="1"/>
</dbReference>
<dbReference type="PANTHER" id="PTHR20836">
    <property type="entry name" value="DIHYDRODIPICOLINATE REDUCTASE"/>
    <property type="match status" value="1"/>
</dbReference>
<dbReference type="Pfam" id="PF05173">
    <property type="entry name" value="DapB_C"/>
    <property type="match status" value="1"/>
</dbReference>
<dbReference type="Pfam" id="PF01113">
    <property type="entry name" value="DapB_N"/>
    <property type="match status" value="1"/>
</dbReference>
<dbReference type="PIRSF" id="PIRSF000161">
    <property type="entry name" value="DHPR"/>
    <property type="match status" value="1"/>
</dbReference>
<dbReference type="SUPFAM" id="SSF55347">
    <property type="entry name" value="Glyceraldehyde-3-phosphate dehydrogenase-like, C-terminal domain"/>
    <property type="match status" value="1"/>
</dbReference>
<dbReference type="SUPFAM" id="SSF51735">
    <property type="entry name" value="NAD(P)-binding Rossmann-fold domains"/>
    <property type="match status" value="1"/>
</dbReference>
<comment type="function">
    <text evidence="1">Catalyzes the conversion of 4-hydroxy-tetrahydrodipicolinate (HTPA) to tetrahydrodipicolinate.</text>
</comment>
<comment type="catalytic activity">
    <reaction evidence="1">
        <text>(S)-2,3,4,5-tetrahydrodipicolinate + NAD(+) + H2O = (2S,4S)-4-hydroxy-2,3,4,5-tetrahydrodipicolinate + NADH + H(+)</text>
        <dbReference type="Rhea" id="RHEA:35323"/>
        <dbReference type="ChEBI" id="CHEBI:15377"/>
        <dbReference type="ChEBI" id="CHEBI:15378"/>
        <dbReference type="ChEBI" id="CHEBI:16845"/>
        <dbReference type="ChEBI" id="CHEBI:57540"/>
        <dbReference type="ChEBI" id="CHEBI:57945"/>
        <dbReference type="ChEBI" id="CHEBI:67139"/>
        <dbReference type="EC" id="1.17.1.8"/>
    </reaction>
</comment>
<comment type="catalytic activity">
    <reaction evidence="1">
        <text>(S)-2,3,4,5-tetrahydrodipicolinate + NADP(+) + H2O = (2S,4S)-4-hydroxy-2,3,4,5-tetrahydrodipicolinate + NADPH + H(+)</text>
        <dbReference type="Rhea" id="RHEA:35331"/>
        <dbReference type="ChEBI" id="CHEBI:15377"/>
        <dbReference type="ChEBI" id="CHEBI:15378"/>
        <dbReference type="ChEBI" id="CHEBI:16845"/>
        <dbReference type="ChEBI" id="CHEBI:57783"/>
        <dbReference type="ChEBI" id="CHEBI:58349"/>
        <dbReference type="ChEBI" id="CHEBI:67139"/>
        <dbReference type="EC" id="1.17.1.8"/>
    </reaction>
</comment>
<comment type="pathway">
    <text evidence="1">Amino-acid biosynthesis; L-lysine biosynthesis via DAP pathway; (S)-tetrahydrodipicolinate from L-aspartate: step 4/4.</text>
</comment>
<comment type="subcellular location">
    <subcellularLocation>
        <location evidence="1">Cytoplasm</location>
    </subcellularLocation>
</comment>
<comment type="similarity">
    <text evidence="1">Belongs to the DapB family.</text>
</comment>
<comment type="caution">
    <text evidence="2">Was originally thought to be a dihydrodipicolinate reductase (DHDPR), catalyzing the conversion of dihydrodipicolinate to tetrahydrodipicolinate. However, it was shown in E.coli that the substrate of the enzymatic reaction is not dihydrodipicolinate (DHDP) but in fact (2S,4S)-4-hydroxy-2,3,4,5-tetrahydrodipicolinic acid (HTPA), the product released by the DapA-catalyzed reaction.</text>
</comment>
<sequence>MRFTLVGNGRMGQQVALVIAQSGCHETAAVLDINTAITPDLFQGSDAIIDFTVREAFFANLPAMLESGVPIVVGTTGWDDLRDEIEVKVSDAGASLLYSANFSLGVNIFLRTVREAARLIAPFGQFDIAFAEQHHTAKADFPSGTALRAADMILSANSRKKSVVRQLSDDKKLAPDELQVASLRLGSVFGKHSAFIDSDADEIVISHTAKSRSGFAAGAVEAAIWLARRHTTAPGFYTMDDFLNETFS</sequence>
<protein>
    <recommendedName>
        <fullName evidence="1">4-hydroxy-tetrahydrodipicolinate reductase</fullName>
        <shortName evidence="1">HTPA reductase</shortName>
        <ecNumber evidence="1">1.17.1.8</ecNumber>
    </recommendedName>
</protein>
<reference key="1">
    <citation type="submission" date="2008-06" db="EMBL/GenBank/DDBJ databases">
        <title>Complete sequence of Pelodictyon phaeoclathratiforme BU-1.</title>
        <authorList>
            <consortium name="US DOE Joint Genome Institute"/>
            <person name="Lucas S."/>
            <person name="Copeland A."/>
            <person name="Lapidus A."/>
            <person name="Glavina del Rio T."/>
            <person name="Dalin E."/>
            <person name="Tice H."/>
            <person name="Bruce D."/>
            <person name="Goodwin L."/>
            <person name="Pitluck S."/>
            <person name="Schmutz J."/>
            <person name="Larimer F."/>
            <person name="Land M."/>
            <person name="Hauser L."/>
            <person name="Kyrpides N."/>
            <person name="Mikhailova N."/>
            <person name="Liu Z."/>
            <person name="Li T."/>
            <person name="Zhao F."/>
            <person name="Overmann J."/>
            <person name="Bryant D.A."/>
            <person name="Richardson P."/>
        </authorList>
    </citation>
    <scope>NUCLEOTIDE SEQUENCE [LARGE SCALE GENOMIC DNA]</scope>
    <source>
        <strain>DSM 5477 / BU-1</strain>
    </source>
</reference>
<feature type="chain" id="PRO_1000093986" description="4-hydroxy-tetrahydrodipicolinate reductase">
    <location>
        <begin position="1"/>
        <end position="248"/>
    </location>
</feature>
<feature type="active site" description="Proton donor/acceptor" evidence="1">
    <location>
        <position position="134"/>
    </location>
</feature>
<feature type="active site" description="Proton donor" evidence="1">
    <location>
        <position position="138"/>
    </location>
</feature>
<feature type="binding site" evidence="1">
    <location>
        <position position="32"/>
    </location>
    <ligand>
        <name>NAD(+)</name>
        <dbReference type="ChEBI" id="CHEBI:57540"/>
    </ligand>
</feature>
<feature type="binding site" evidence="1">
    <location>
        <begin position="74"/>
        <end position="76"/>
    </location>
    <ligand>
        <name>NAD(+)</name>
        <dbReference type="ChEBI" id="CHEBI:57540"/>
    </ligand>
</feature>
<feature type="binding site" evidence="1">
    <location>
        <begin position="99"/>
        <end position="102"/>
    </location>
    <ligand>
        <name>NAD(+)</name>
        <dbReference type="ChEBI" id="CHEBI:57540"/>
    </ligand>
</feature>
<feature type="binding site" evidence="1">
    <location>
        <position position="135"/>
    </location>
    <ligand>
        <name>(S)-2,3,4,5-tetrahydrodipicolinate</name>
        <dbReference type="ChEBI" id="CHEBI:16845"/>
    </ligand>
</feature>
<feature type="binding site" evidence="1">
    <location>
        <begin position="144"/>
        <end position="145"/>
    </location>
    <ligand>
        <name>(S)-2,3,4,5-tetrahydrodipicolinate</name>
        <dbReference type="ChEBI" id="CHEBI:16845"/>
    </ligand>
</feature>
<keyword id="KW-0028">Amino-acid biosynthesis</keyword>
<keyword id="KW-0963">Cytoplasm</keyword>
<keyword id="KW-0220">Diaminopimelate biosynthesis</keyword>
<keyword id="KW-0457">Lysine biosynthesis</keyword>
<keyword id="KW-0520">NAD</keyword>
<keyword id="KW-0521">NADP</keyword>
<keyword id="KW-0560">Oxidoreductase</keyword>
<keyword id="KW-1185">Reference proteome</keyword>
<proteinExistence type="inferred from homology"/>
<gene>
    <name evidence="1" type="primary">dapB</name>
    <name type="ordered locus">Ppha_2437</name>
</gene>
<evidence type="ECO:0000255" key="1">
    <source>
        <dbReference type="HAMAP-Rule" id="MF_00102"/>
    </source>
</evidence>
<evidence type="ECO:0000305" key="2"/>
<accession>B4SEU9</accession>